<gene>
    <name evidence="1" type="primary">lgt</name>
    <name type="ordered locus">BWG_2563</name>
</gene>
<keyword id="KW-0997">Cell inner membrane</keyword>
<keyword id="KW-1003">Cell membrane</keyword>
<keyword id="KW-0472">Membrane</keyword>
<keyword id="KW-0808">Transferase</keyword>
<keyword id="KW-0812">Transmembrane</keyword>
<keyword id="KW-1133">Transmembrane helix</keyword>
<reference key="1">
    <citation type="journal article" date="2009" name="J. Bacteriol.">
        <title>Genomic sequencing reveals regulatory mutations and recombinational events in the widely used MC4100 lineage of Escherichia coli K-12.</title>
        <authorList>
            <person name="Ferenci T."/>
            <person name="Zhou Z."/>
            <person name="Betteridge T."/>
            <person name="Ren Y."/>
            <person name="Liu Y."/>
            <person name="Feng L."/>
            <person name="Reeves P.R."/>
            <person name="Wang L."/>
        </authorList>
    </citation>
    <scope>NUCLEOTIDE SEQUENCE [LARGE SCALE GENOMIC DNA]</scope>
    <source>
        <strain>K12 / MC4100 / BW2952</strain>
    </source>
</reference>
<feature type="chain" id="PRO_1000213653" description="Phosphatidylglycerol--prolipoprotein diacylglyceryl transferase">
    <location>
        <begin position="1"/>
        <end position="291"/>
    </location>
</feature>
<feature type="transmembrane region" description="Helical" evidence="1">
    <location>
        <begin position="21"/>
        <end position="41"/>
    </location>
</feature>
<feature type="transmembrane region" description="Helical" evidence="1">
    <location>
        <begin position="60"/>
        <end position="80"/>
    </location>
</feature>
<feature type="transmembrane region" description="Helical" evidence="1">
    <location>
        <begin position="96"/>
        <end position="116"/>
    </location>
</feature>
<feature type="transmembrane region" description="Helical" evidence="1">
    <location>
        <begin position="225"/>
        <end position="245"/>
    </location>
</feature>
<feature type="transmembrane region" description="Helical" evidence="1">
    <location>
        <begin position="260"/>
        <end position="280"/>
    </location>
</feature>
<feature type="binding site" evidence="1">
    <location>
        <position position="143"/>
    </location>
    <ligand>
        <name>a 1,2-diacyl-sn-glycero-3-phospho-(1'-sn-glycerol)</name>
        <dbReference type="ChEBI" id="CHEBI:64716"/>
    </ligand>
</feature>
<protein>
    <recommendedName>
        <fullName evidence="1">Phosphatidylglycerol--prolipoprotein diacylglyceryl transferase</fullName>
        <ecNumber evidence="1">2.5.1.145</ecNumber>
    </recommendedName>
</protein>
<evidence type="ECO:0000255" key="1">
    <source>
        <dbReference type="HAMAP-Rule" id="MF_01147"/>
    </source>
</evidence>
<dbReference type="EC" id="2.5.1.145" evidence="1"/>
<dbReference type="EMBL" id="CP001396">
    <property type="protein sequence ID" value="ACR64029.1"/>
    <property type="molecule type" value="Genomic_DNA"/>
</dbReference>
<dbReference type="RefSeq" id="WP_000204658.1">
    <property type="nucleotide sequence ID" value="NC_012759.1"/>
</dbReference>
<dbReference type="SMR" id="C4ZZY0"/>
<dbReference type="GeneID" id="93779170"/>
<dbReference type="KEGG" id="ebw:BWG_2563"/>
<dbReference type="HOGENOM" id="CLU_013386_1_0_6"/>
<dbReference type="UniPathway" id="UPA00664"/>
<dbReference type="GO" id="GO:0005886">
    <property type="term" value="C:plasma membrane"/>
    <property type="evidence" value="ECO:0007669"/>
    <property type="project" value="UniProtKB-SubCell"/>
</dbReference>
<dbReference type="GO" id="GO:0008961">
    <property type="term" value="F:phosphatidylglycerol-prolipoprotein diacylglyceryl transferase activity"/>
    <property type="evidence" value="ECO:0007669"/>
    <property type="project" value="UniProtKB-UniRule"/>
</dbReference>
<dbReference type="GO" id="GO:0042158">
    <property type="term" value="P:lipoprotein biosynthetic process"/>
    <property type="evidence" value="ECO:0007669"/>
    <property type="project" value="UniProtKB-UniRule"/>
</dbReference>
<dbReference type="HAMAP" id="MF_01147">
    <property type="entry name" value="Lgt"/>
    <property type="match status" value="1"/>
</dbReference>
<dbReference type="InterPro" id="IPR001640">
    <property type="entry name" value="Lgt"/>
</dbReference>
<dbReference type="NCBIfam" id="TIGR00544">
    <property type="entry name" value="lgt"/>
    <property type="match status" value="1"/>
</dbReference>
<dbReference type="PANTHER" id="PTHR30589:SF0">
    <property type="entry name" value="PHOSPHATIDYLGLYCEROL--PROLIPOPROTEIN DIACYLGLYCERYL TRANSFERASE"/>
    <property type="match status" value="1"/>
</dbReference>
<dbReference type="PANTHER" id="PTHR30589">
    <property type="entry name" value="PROLIPOPROTEIN DIACYLGLYCERYL TRANSFERASE"/>
    <property type="match status" value="1"/>
</dbReference>
<dbReference type="Pfam" id="PF01790">
    <property type="entry name" value="LGT"/>
    <property type="match status" value="1"/>
</dbReference>
<dbReference type="PROSITE" id="PS01311">
    <property type="entry name" value="LGT"/>
    <property type="match status" value="1"/>
</dbReference>
<name>LGT_ECOBW</name>
<sequence length="291" mass="33108">MTSSYLHFPEFDPVIFSIGPVALHWYGLMYLVGFIFAMWLATRRANRPGSGWTKNEVENLLYAGFLGVFLGGRIGYVLFYNFPQFMADPLYLFRVWDGGMSFHGGLIGVIVVMIIFARRTKRSFFQVSDFIAPLIPFGLGAGRLGNFINGELWGRVDPNFPFAMLFPGSRTEDILLLQTNPQWQSIFDTYGVLPRHPSQLYELLLEGVVLFIILNLYIRKPRPMGAVSGLFLIGYGAFRIIVEFFRQPDAQFTGAWVQYISMGQILSIPMIVAGVIMMVWAYRRSPQQHVS</sequence>
<comment type="function">
    <text evidence="1">Catalyzes the transfer of the diacylglyceryl group from phosphatidylglycerol to the sulfhydryl group of the N-terminal cysteine of a prolipoprotein, the first step in the formation of mature lipoproteins.</text>
</comment>
<comment type="catalytic activity">
    <reaction evidence="1">
        <text>L-cysteinyl-[prolipoprotein] + a 1,2-diacyl-sn-glycero-3-phospho-(1'-sn-glycerol) = an S-1,2-diacyl-sn-glyceryl-L-cysteinyl-[prolipoprotein] + sn-glycerol 1-phosphate + H(+)</text>
        <dbReference type="Rhea" id="RHEA:56712"/>
        <dbReference type="Rhea" id="RHEA-COMP:14679"/>
        <dbReference type="Rhea" id="RHEA-COMP:14680"/>
        <dbReference type="ChEBI" id="CHEBI:15378"/>
        <dbReference type="ChEBI" id="CHEBI:29950"/>
        <dbReference type="ChEBI" id="CHEBI:57685"/>
        <dbReference type="ChEBI" id="CHEBI:64716"/>
        <dbReference type="ChEBI" id="CHEBI:140658"/>
        <dbReference type="EC" id="2.5.1.145"/>
    </reaction>
</comment>
<comment type="pathway">
    <text evidence="1">Protein modification; lipoprotein biosynthesis (diacylglyceryl transfer).</text>
</comment>
<comment type="subcellular location">
    <subcellularLocation>
        <location evidence="1">Cell inner membrane</location>
        <topology evidence="1">Multi-pass membrane protein</topology>
    </subcellularLocation>
</comment>
<comment type="similarity">
    <text evidence="1">Belongs to the Lgt family.</text>
</comment>
<proteinExistence type="inferred from homology"/>
<organism>
    <name type="scientific">Escherichia coli (strain K12 / MC4100 / BW2952)</name>
    <dbReference type="NCBI Taxonomy" id="595496"/>
    <lineage>
        <taxon>Bacteria</taxon>
        <taxon>Pseudomonadati</taxon>
        <taxon>Pseudomonadota</taxon>
        <taxon>Gammaproteobacteria</taxon>
        <taxon>Enterobacterales</taxon>
        <taxon>Enterobacteriaceae</taxon>
        <taxon>Escherichia</taxon>
    </lineage>
</organism>
<accession>C4ZZY0</accession>